<proteinExistence type="evidence at transcript level"/>
<dbReference type="EMBL" id="U18466">
    <property type="protein sequence ID" value="AAA65277.1"/>
    <property type="molecule type" value="Genomic_DNA"/>
</dbReference>
<dbReference type="RefSeq" id="NP_042741.1">
    <property type="nucleotide sequence ID" value="NC_001659.2"/>
</dbReference>
<dbReference type="GeneID" id="22220429"/>
<dbReference type="KEGG" id="vg:22220429"/>
<dbReference type="Proteomes" id="UP000000624">
    <property type="component" value="Segment"/>
</dbReference>
<dbReference type="GO" id="GO:0005524">
    <property type="term" value="F:ATP binding"/>
    <property type="evidence" value="ECO:0007669"/>
    <property type="project" value="InterPro"/>
</dbReference>
<dbReference type="GO" id="GO:0003688">
    <property type="term" value="F:DNA replication origin binding"/>
    <property type="evidence" value="ECO:0007669"/>
    <property type="project" value="InterPro"/>
</dbReference>
<dbReference type="GO" id="GO:0006260">
    <property type="term" value="P:DNA replication"/>
    <property type="evidence" value="ECO:0007669"/>
    <property type="project" value="UniProtKB-KW"/>
</dbReference>
<dbReference type="Gene3D" id="3.40.50.300">
    <property type="entry name" value="P-loop containing nucleotide triphosphate hydrolases"/>
    <property type="match status" value="1"/>
</dbReference>
<dbReference type="InterPro" id="IPR027417">
    <property type="entry name" value="P-loop_NTPase"/>
</dbReference>
<dbReference type="InterPro" id="IPR003450">
    <property type="entry name" value="Replication_origin-bd"/>
</dbReference>
<dbReference type="Pfam" id="PF02399">
    <property type="entry name" value="Herpes_ori_bp"/>
    <property type="match status" value="2"/>
</dbReference>
<dbReference type="Pfam" id="PF03121">
    <property type="entry name" value="Herpes_UL52"/>
    <property type="match status" value="1"/>
</dbReference>
<dbReference type="SUPFAM" id="SSF52540">
    <property type="entry name" value="P-loop containing nucleoside triphosphate hydrolases"/>
    <property type="match status" value="1"/>
</dbReference>
<feature type="chain" id="PRO_0000373465" description="Putative helicase/primase complex protein">
    <location>
        <begin position="1"/>
        <end position="1055"/>
    </location>
</feature>
<protein>
    <recommendedName>
        <fullName>Putative helicase/primase complex protein</fullName>
        <shortName>pF1055L</shortName>
    </recommendedName>
</protein>
<name>PRIM_ASFB7</name>
<keyword id="KW-0235">DNA replication</keyword>
<keyword id="KW-0244">Early protein</keyword>
<keyword id="KW-1185">Reference proteome</keyword>
<organismHost>
    <name type="scientific">Ornithodoros</name>
    <name type="common">relapsing fever ticks</name>
    <dbReference type="NCBI Taxonomy" id="6937"/>
</organismHost>
<organismHost>
    <name type="scientific">Sus scrofa</name>
    <name type="common">Pig</name>
    <dbReference type="NCBI Taxonomy" id="9823"/>
</organismHost>
<accession>Q65146</accession>
<gene>
    <name type="ordered locus">Ba71V-047</name>
    <name type="ORF">F1055L</name>
</gene>
<organism>
    <name type="scientific">African swine fever virus (strain Badajoz 1971 Vero-adapted)</name>
    <name type="common">Ba71V</name>
    <name type="synonym">ASFV</name>
    <dbReference type="NCBI Taxonomy" id="10498"/>
    <lineage>
        <taxon>Viruses</taxon>
        <taxon>Varidnaviria</taxon>
        <taxon>Bamfordvirae</taxon>
        <taxon>Nucleocytoviricota</taxon>
        <taxon>Pokkesviricetes</taxon>
        <taxon>Asfuvirales</taxon>
        <taxon>Asfarviridae</taxon>
        <taxon>Asfivirus</taxon>
        <taxon>African swine fever virus</taxon>
    </lineage>
</organism>
<comment type="function">
    <text>May be involved in DNA replication.</text>
</comment>
<comment type="induction">
    <text evidence="1">Expressed in the early phase of the viral replicative cycle.</text>
</comment>
<comment type="similarity">
    <text evidence="2">Belongs to the asfivirus F1055L family.</text>
</comment>
<sequence length="1055" mass="123892">MQETFKFLRCNSQGEAVEDKYSLETLKNHFVVRDEYNNLFRVFSNRDDFWEWEAAQPFEQKCFHEVVFGFLPQRLKFDIDFPVNKSYSDDNDNVNDDDSVYDDDNVYDILDMIINVIMDVFYETYSLPYNINLTREQILLTDSIGLNKKRELKYSFHIILYTYSVLNNNEAKAFTSKVLENLPKHVYPFVDPQVNKSIQNFRIIGSHKKGSMRVKMFNEELAEVFETSTTTKKSDTLIATPFETTCLPCIFTNVKETTPSSCDTIQQSELEEVLKFAGTLCKNHCFLRVHKNLVLFKRTSPSYCEICKRMHDKDNTLILRVTGNKVYQHCRHDNKHSLLMGSLSGTTNFVETYVDQVMTKSIEVHESILFEELPDTQKHIYDESSMREYERVPTLVVKAQMKIGKTVQLRNYLQKYYGNNSISKQQTIRFVTFRQIFSKNIQSRLPNFTLYSEVTGDLDSYERVIVQVESLFRLTSTAEPVDLLILDEVESIFNQFNSGLHKYFAPSFAIFMWMLETANYVICLDANLGNRTYNILQRFRGDVPIFFHWNQYKRAQHDTYYFTSSRETWLNNLLKDLLEDKKIVIPTNSLMEARLLQSFIQKKFPEKKIGFYSSKSTAHERESHFNNVSYYWGLVDILIYTPTISAGVSYEDKRFDVLYGFFNNMSCDVETCCQMLGRVRELKSKCYKICLQGKQNYYPETIEDIEMFTLQKRDTLFQTINNHQLSFTYSKETGRPVYYKTPYYHLWLETMRIQHLSKNHFITRFINQVADTGAKVFILTGEKLETVKQYTSIKMEIKHQDYVNIASAETIDANKALQIKQNLKEGITVDQQDLFAYEKYKLLEFYAWHGHKITPKFVEQYNSFMTKQNYTGRVQISRGKTVYESLTMLQTQELNFHQWAMQHAEHHDLQFNYSFQSHMYAIMLLTKCGFKCVQDPNILTNEQLMTKLVDEFVQYDLSAVSFEFKLKKPSKTDPQTILKFINKVLGLRYGLKIHHNKGNYYIKNTKAGSLIPFVRQQIKQSPCVVSNLLPITETSSVKEETLTETSPIKETFTET</sequence>
<reference key="1">
    <citation type="journal article" date="1995" name="Virology">
        <title>Analysis of the complete nucleotide sequence of African swine fever virus.</title>
        <authorList>
            <person name="Yanez R.J."/>
            <person name="Rodriguez J.M."/>
            <person name="Nogal M.L."/>
            <person name="Yuste L."/>
            <person name="Enriquez C."/>
            <person name="Rodriguez J.F."/>
            <person name="Vinuela E."/>
        </authorList>
    </citation>
    <scope>NUCLEOTIDE SEQUENCE [LARGE SCALE GENOMIC DNA]</scope>
</reference>
<reference key="2">
    <citation type="journal article" date="2020" name="J. Virol.">
        <title>The African Swine Fever Virus Transcriptome.</title>
        <authorList>
            <person name="Cackett G."/>
            <person name="Matelska D."/>
            <person name="Sykora M."/>
            <person name="Portugal R."/>
            <person name="Malecki M."/>
            <person name="Baehler J."/>
            <person name="Dixon L."/>
            <person name="Werner F."/>
        </authorList>
    </citation>
    <scope>INDUCTION</scope>
</reference>
<evidence type="ECO:0000269" key="1">
    <source>
    </source>
</evidence>
<evidence type="ECO:0000305" key="2"/>